<evidence type="ECO:0000255" key="1">
    <source>
        <dbReference type="HAMAP-Rule" id="MF_02006"/>
    </source>
</evidence>
<protein>
    <recommendedName>
        <fullName evidence="1">Tyrosine--tRNA ligase</fullName>
        <ecNumber evidence="1">6.1.1.1</ecNumber>
    </recommendedName>
    <alternativeName>
        <fullName evidence="1">Tyrosyl-tRNA synthetase</fullName>
        <shortName evidence="1">TyrRS</shortName>
    </alternativeName>
</protein>
<gene>
    <name evidence="1" type="primary">tyrS</name>
    <name type="ordered locus">CTA_0067</name>
</gene>
<comment type="function">
    <text evidence="1">Catalyzes the attachment of tyrosine to tRNA(Tyr) in a two-step reaction: tyrosine is first activated by ATP to form Tyr-AMP and then transferred to the acceptor end of tRNA(Tyr).</text>
</comment>
<comment type="catalytic activity">
    <reaction evidence="1">
        <text>tRNA(Tyr) + L-tyrosine + ATP = L-tyrosyl-tRNA(Tyr) + AMP + diphosphate + H(+)</text>
        <dbReference type="Rhea" id="RHEA:10220"/>
        <dbReference type="Rhea" id="RHEA-COMP:9706"/>
        <dbReference type="Rhea" id="RHEA-COMP:9707"/>
        <dbReference type="ChEBI" id="CHEBI:15378"/>
        <dbReference type="ChEBI" id="CHEBI:30616"/>
        <dbReference type="ChEBI" id="CHEBI:33019"/>
        <dbReference type="ChEBI" id="CHEBI:58315"/>
        <dbReference type="ChEBI" id="CHEBI:78442"/>
        <dbReference type="ChEBI" id="CHEBI:78536"/>
        <dbReference type="ChEBI" id="CHEBI:456215"/>
        <dbReference type="EC" id="6.1.1.1"/>
    </reaction>
</comment>
<comment type="subunit">
    <text evidence="1">Homodimer.</text>
</comment>
<comment type="subcellular location">
    <subcellularLocation>
        <location evidence="1">Cytoplasm</location>
    </subcellularLocation>
</comment>
<comment type="similarity">
    <text evidence="1">Belongs to the class-I aminoacyl-tRNA synthetase family. TyrS type 1 subfamily.</text>
</comment>
<keyword id="KW-0030">Aminoacyl-tRNA synthetase</keyword>
<keyword id="KW-0067">ATP-binding</keyword>
<keyword id="KW-0963">Cytoplasm</keyword>
<keyword id="KW-0436">Ligase</keyword>
<keyword id="KW-0547">Nucleotide-binding</keyword>
<keyword id="KW-0648">Protein biosynthesis</keyword>
<keyword id="KW-0694">RNA-binding</keyword>
<accession>Q3KMV9</accession>
<proteinExistence type="inferred from homology"/>
<sequence length="412" mass="45465">MQQLIDNLKKRGILDNSSAGLESLTVPVSAYLGFDPTAPSLHIGHWIGICFLRRLAAYGITPVALVGGATGMIGDPSGKSVERSLLDQAQVLDNSKKIAAALASYLPGIRIVNNADWLGSLSMVDFLRDVGKHFRLGSMLAKDVVKQRVYSEEGISYTEFSYLLLQSYDFAHLFKEHNVVLQCGGSDQWGNITSGIDYIRRRGLGQAYGLTYPLLTDSKGKKIGKTESGTIWLDPALTPPYELFQYFLRLPDQEISKVMRTLTLLDNEEIFALDERLTSDPQAVKKYIAEVIVKDVHGSEGLAQAQAATESFFASKGKSITEAELVALVESGVGVKVARTDLIGKRWLDIVVELGFCSSRGQARRLIQQRGLYINQEPLADEQSILDGTQLCFDRYVLLSQGKRKKQVIDLN</sequence>
<reference key="1">
    <citation type="journal article" date="2005" name="Infect. Immun.">
        <title>Comparative genomic analysis of Chlamydia trachomatis oculotropic and genitotropic strains.</title>
        <authorList>
            <person name="Carlson J.H."/>
            <person name="Porcella S.F."/>
            <person name="McClarty G."/>
            <person name="Caldwell H.D."/>
        </authorList>
    </citation>
    <scope>NUCLEOTIDE SEQUENCE [LARGE SCALE GENOMIC DNA]</scope>
    <source>
        <strain>ATCC VR-571B / DSM 19440 / HAR-13</strain>
    </source>
</reference>
<organism>
    <name type="scientific">Chlamydia trachomatis serovar A (strain ATCC VR-571B / DSM 19440 / HAR-13)</name>
    <dbReference type="NCBI Taxonomy" id="315277"/>
    <lineage>
        <taxon>Bacteria</taxon>
        <taxon>Pseudomonadati</taxon>
        <taxon>Chlamydiota</taxon>
        <taxon>Chlamydiia</taxon>
        <taxon>Chlamydiales</taxon>
        <taxon>Chlamydiaceae</taxon>
        <taxon>Chlamydia/Chlamydophila group</taxon>
        <taxon>Chlamydia</taxon>
    </lineage>
</organism>
<dbReference type="EC" id="6.1.1.1" evidence="1"/>
<dbReference type="EMBL" id="CP000051">
    <property type="protein sequence ID" value="AAX50313.1"/>
    <property type="molecule type" value="Genomic_DNA"/>
</dbReference>
<dbReference type="RefSeq" id="WP_011324547.1">
    <property type="nucleotide sequence ID" value="NC_007429.1"/>
</dbReference>
<dbReference type="SMR" id="Q3KMV9"/>
<dbReference type="KEGG" id="cta:CTA_0067"/>
<dbReference type="HOGENOM" id="CLU_024003_0_3_0"/>
<dbReference type="Proteomes" id="UP000002532">
    <property type="component" value="Chromosome"/>
</dbReference>
<dbReference type="GO" id="GO:0005829">
    <property type="term" value="C:cytosol"/>
    <property type="evidence" value="ECO:0007669"/>
    <property type="project" value="TreeGrafter"/>
</dbReference>
<dbReference type="GO" id="GO:0005524">
    <property type="term" value="F:ATP binding"/>
    <property type="evidence" value="ECO:0007669"/>
    <property type="project" value="UniProtKB-UniRule"/>
</dbReference>
<dbReference type="GO" id="GO:0003723">
    <property type="term" value="F:RNA binding"/>
    <property type="evidence" value="ECO:0007669"/>
    <property type="project" value="UniProtKB-KW"/>
</dbReference>
<dbReference type="GO" id="GO:0004831">
    <property type="term" value="F:tyrosine-tRNA ligase activity"/>
    <property type="evidence" value="ECO:0007669"/>
    <property type="project" value="UniProtKB-UniRule"/>
</dbReference>
<dbReference type="GO" id="GO:0006437">
    <property type="term" value="P:tyrosyl-tRNA aminoacylation"/>
    <property type="evidence" value="ECO:0007669"/>
    <property type="project" value="UniProtKB-UniRule"/>
</dbReference>
<dbReference type="CDD" id="cd00165">
    <property type="entry name" value="S4"/>
    <property type="match status" value="1"/>
</dbReference>
<dbReference type="CDD" id="cd00805">
    <property type="entry name" value="TyrRS_core"/>
    <property type="match status" value="1"/>
</dbReference>
<dbReference type="FunFam" id="3.40.50.620:FF:000287">
    <property type="entry name" value="Tyrosine--tRNA ligase"/>
    <property type="match status" value="1"/>
</dbReference>
<dbReference type="Gene3D" id="3.40.50.620">
    <property type="entry name" value="HUPs"/>
    <property type="match status" value="1"/>
</dbReference>
<dbReference type="Gene3D" id="3.10.290.10">
    <property type="entry name" value="RNA-binding S4 domain"/>
    <property type="match status" value="1"/>
</dbReference>
<dbReference type="Gene3D" id="1.10.240.10">
    <property type="entry name" value="Tyrosyl-Transfer RNA Synthetase"/>
    <property type="match status" value="1"/>
</dbReference>
<dbReference type="HAMAP" id="MF_02006">
    <property type="entry name" value="Tyr_tRNA_synth_type1"/>
    <property type="match status" value="1"/>
</dbReference>
<dbReference type="InterPro" id="IPR002305">
    <property type="entry name" value="aa-tRNA-synth_Ic"/>
</dbReference>
<dbReference type="InterPro" id="IPR014729">
    <property type="entry name" value="Rossmann-like_a/b/a_fold"/>
</dbReference>
<dbReference type="InterPro" id="IPR002942">
    <property type="entry name" value="S4_RNA-bd"/>
</dbReference>
<dbReference type="InterPro" id="IPR036986">
    <property type="entry name" value="S4_RNA-bd_sf"/>
</dbReference>
<dbReference type="InterPro" id="IPR002307">
    <property type="entry name" value="Tyr-tRNA-ligase"/>
</dbReference>
<dbReference type="InterPro" id="IPR024088">
    <property type="entry name" value="Tyr-tRNA-ligase_bac-type"/>
</dbReference>
<dbReference type="InterPro" id="IPR024107">
    <property type="entry name" value="Tyr-tRNA-ligase_bac_1"/>
</dbReference>
<dbReference type="NCBIfam" id="TIGR00234">
    <property type="entry name" value="tyrS"/>
    <property type="match status" value="1"/>
</dbReference>
<dbReference type="PANTHER" id="PTHR11766:SF0">
    <property type="entry name" value="TYROSINE--TRNA LIGASE, MITOCHONDRIAL"/>
    <property type="match status" value="1"/>
</dbReference>
<dbReference type="PANTHER" id="PTHR11766">
    <property type="entry name" value="TYROSYL-TRNA SYNTHETASE"/>
    <property type="match status" value="1"/>
</dbReference>
<dbReference type="Pfam" id="PF01479">
    <property type="entry name" value="S4"/>
    <property type="match status" value="1"/>
</dbReference>
<dbReference type="Pfam" id="PF00579">
    <property type="entry name" value="tRNA-synt_1b"/>
    <property type="match status" value="1"/>
</dbReference>
<dbReference type="PRINTS" id="PR01040">
    <property type="entry name" value="TRNASYNTHTYR"/>
</dbReference>
<dbReference type="SMART" id="SM00363">
    <property type="entry name" value="S4"/>
    <property type="match status" value="1"/>
</dbReference>
<dbReference type="SUPFAM" id="SSF55174">
    <property type="entry name" value="Alpha-L RNA-binding motif"/>
    <property type="match status" value="1"/>
</dbReference>
<dbReference type="SUPFAM" id="SSF52374">
    <property type="entry name" value="Nucleotidylyl transferase"/>
    <property type="match status" value="1"/>
</dbReference>
<dbReference type="PROSITE" id="PS50889">
    <property type="entry name" value="S4"/>
    <property type="match status" value="1"/>
</dbReference>
<feature type="chain" id="PRO_0000234693" description="Tyrosine--tRNA ligase">
    <location>
        <begin position="1"/>
        <end position="412"/>
    </location>
</feature>
<feature type="domain" description="S4 RNA-binding" evidence="1">
    <location>
        <begin position="345"/>
        <end position="411"/>
    </location>
</feature>
<feature type="short sequence motif" description="'HIGH' region">
    <location>
        <begin position="36"/>
        <end position="45"/>
    </location>
</feature>
<feature type="short sequence motif" description="'KMSKS' region">
    <location>
        <begin position="222"/>
        <end position="226"/>
    </location>
</feature>
<feature type="binding site" evidence="1">
    <location>
        <position position="31"/>
    </location>
    <ligand>
        <name>L-tyrosine</name>
        <dbReference type="ChEBI" id="CHEBI:58315"/>
    </ligand>
</feature>
<feature type="binding site" evidence="1">
    <location>
        <position position="162"/>
    </location>
    <ligand>
        <name>L-tyrosine</name>
        <dbReference type="ChEBI" id="CHEBI:58315"/>
    </ligand>
</feature>
<feature type="binding site" evidence="1">
    <location>
        <position position="166"/>
    </location>
    <ligand>
        <name>L-tyrosine</name>
        <dbReference type="ChEBI" id="CHEBI:58315"/>
    </ligand>
</feature>
<feature type="binding site" evidence="1">
    <location>
        <position position="225"/>
    </location>
    <ligand>
        <name>ATP</name>
        <dbReference type="ChEBI" id="CHEBI:30616"/>
    </ligand>
</feature>
<name>SYY_CHLTA</name>